<dbReference type="EC" id="3.11.1.1" evidence="1"/>
<dbReference type="EMBL" id="CP000626">
    <property type="protein sequence ID" value="ABQ18775.1"/>
    <property type="molecule type" value="Genomic_DNA"/>
</dbReference>
<dbReference type="EMBL" id="CP001236">
    <property type="protein sequence ID" value="ACP11543.1"/>
    <property type="molecule type" value="Genomic_DNA"/>
</dbReference>
<dbReference type="RefSeq" id="WP_001889086.1">
    <property type="nucleotide sequence ID" value="NZ_JAACZH010000032.1"/>
</dbReference>
<dbReference type="SMR" id="A5F051"/>
<dbReference type="KEGG" id="vco:VC0395_0548"/>
<dbReference type="KEGG" id="vcr:VC395_A0709"/>
<dbReference type="PATRIC" id="fig|345073.21.peg.3443"/>
<dbReference type="eggNOG" id="COG0637">
    <property type="taxonomic scope" value="Bacteria"/>
</dbReference>
<dbReference type="HOGENOM" id="CLU_045011_12_0_6"/>
<dbReference type="OrthoDB" id="5504491at2"/>
<dbReference type="Proteomes" id="UP000000249">
    <property type="component" value="Chromosome 1"/>
</dbReference>
<dbReference type="GO" id="GO:0005829">
    <property type="term" value="C:cytosol"/>
    <property type="evidence" value="ECO:0007669"/>
    <property type="project" value="TreeGrafter"/>
</dbReference>
<dbReference type="GO" id="GO:0000287">
    <property type="term" value="F:magnesium ion binding"/>
    <property type="evidence" value="ECO:0007669"/>
    <property type="project" value="UniProtKB-UniRule"/>
</dbReference>
<dbReference type="GO" id="GO:0008967">
    <property type="term" value="F:phosphoglycolate phosphatase activity"/>
    <property type="evidence" value="ECO:0007669"/>
    <property type="project" value="TreeGrafter"/>
</dbReference>
<dbReference type="GO" id="GO:0050194">
    <property type="term" value="F:phosphonoacetaldehyde hydrolase activity"/>
    <property type="evidence" value="ECO:0007669"/>
    <property type="project" value="UniProtKB-UniRule"/>
</dbReference>
<dbReference type="GO" id="GO:0006281">
    <property type="term" value="P:DNA repair"/>
    <property type="evidence" value="ECO:0007669"/>
    <property type="project" value="TreeGrafter"/>
</dbReference>
<dbReference type="GO" id="GO:0019700">
    <property type="term" value="P:organic phosphonate catabolic process"/>
    <property type="evidence" value="ECO:0007669"/>
    <property type="project" value="InterPro"/>
</dbReference>
<dbReference type="CDD" id="cd02586">
    <property type="entry name" value="HAD_PHN"/>
    <property type="match status" value="1"/>
</dbReference>
<dbReference type="FunFam" id="1.10.150.240:FF:000006">
    <property type="entry name" value="Phosphonoacetaldehyde hydrolase"/>
    <property type="match status" value="1"/>
</dbReference>
<dbReference type="Gene3D" id="3.40.50.1000">
    <property type="entry name" value="HAD superfamily/HAD-like"/>
    <property type="match status" value="1"/>
</dbReference>
<dbReference type="Gene3D" id="1.10.150.240">
    <property type="entry name" value="Putative phosphatase, domain 2"/>
    <property type="match status" value="1"/>
</dbReference>
<dbReference type="HAMAP" id="MF_01375">
    <property type="entry name" value="PhnX"/>
    <property type="match status" value="1"/>
</dbReference>
<dbReference type="InterPro" id="IPR050155">
    <property type="entry name" value="HAD-like_hydrolase_sf"/>
</dbReference>
<dbReference type="InterPro" id="IPR036412">
    <property type="entry name" value="HAD-like_sf"/>
</dbReference>
<dbReference type="InterPro" id="IPR006439">
    <property type="entry name" value="HAD-SF_hydro_IA"/>
</dbReference>
<dbReference type="InterPro" id="IPR023214">
    <property type="entry name" value="HAD_sf"/>
</dbReference>
<dbReference type="InterPro" id="IPR023198">
    <property type="entry name" value="PGP-like_dom2"/>
</dbReference>
<dbReference type="InterPro" id="IPR006323">
    <property type="entry name" value="Phosphonoacetald_hydro"/>
</dbReference>
<dbReference type="NCBIfam" id="TIGR01509">
    <property type="entry name" value="HAD-SF-IA-v3"/>
    <property type="match status" value="1"/>
</dbReference>
<dbReference type="NCBIfam" id="TIGR01422">
    <property type="entry name" value="phosphonatase"/>
    <property type="match status" value="1"/>
</dbReference>
<dbReference type="PANTHER" id="PTHR43434">
    <property type="entry name" value="PHOSPHOGLYCOLATE PHOSPHATASE"/>
    <property type="match status" value="1"/>
</dbReference>
<dbReference type="PANTHER" id="PTHR43434:SF19">
    <property type="entry name" value="PHOSPHONOACETALDEHYDE HYDROLASE"/>
    <property type="match status" value="1"/>
</dbReference>
<dbReference type="Pfam" id="PF00702">
    <property type="entry name" value="Hydrolase"/>
    <property type="match status" value="1"/>
</dbReference>
<dbReference type="SFLD" id="SFLDS00003">
    <property type="entry name" value="Haloacid_Dehalogenase"/>
    <property type="match status" value="1"/>
</dbReference>
<dbReference type="SFLD" id="SFLDF00038">
    <property type="entry name" value="phosphonoacetaldehyde_hydrolas"/>
    <property type="match status" value="1"/>
</dbReference>
<dbReference type="SUPFAM" id="SSF56784">
    <property type="entry name" value="HAD-like"/>
    <property type="match status" value="1"/>
</dbReference>
<reference key="1">
    <citation type="submission" date="2007-03" db="EMBL/GenBank/DDBJ databases">
        <authorList>
            <person name="Heidelberg J."/>
        </authorList>
    </citation>
    <scope>NUCLEOTIDE SEQUENCE [LARGE SCALE GENOMIC DNA]</scope>
    <source>
        <strain>ATCC 39541 / Classical Ogawa 395 / O395</strain>
    </source>
</reference>
<reference key="2">
    <citation type="journal article" date="2008" name="PLoS ONE">
        <title>A recalibrated molecular clock and independent origins for the cholera pandemic clones.</title>
        <authorList>
            <person name="Feng L."/>
            <person name="Reeves P.R."/>
            <person name="Lan R."/>
            <person name="Ren Y."/>
            <person name="Gao C."/>
            <person name="Zhou Z."/>
            <person name="Ren Y."/>
            <person name="Cheng J."/>
            <person name="Wang W."/>
            <person name="Wang J."/>
            <person name="Qian W."/>
            <person name="Li D."/>
            <person name="Wang L."/>
        </authorList>
    </citation>
    <scope>NUCLEOTIDE SEQUENCE [LARGE SCALE GENOMIC DNA]</scope>
    <source>
        <strain>ATCC 39541 / Classical Ogawa 395 / O395</strain>
    </source>
</reference>
<organism>
    <name type="scientific">Vibrio cholerae serotype O1 (strain ATCC 39541 / Classical Ogawa 395 / O395)</name>
    <dbReference type="NCBI Taxonomy" id="345073"/>
    <lineage>
        <taxon>Bacteria</taxon>
        <taxon>Pseudomonadati</taxon>
        <taxon>Pseudomonadota</taxon>
        <taxon>Gammaproteobacteria</taxon>
        <taxon>Vibrionales</taxon>
        <taxon>Vibrionaceae</taxon>
        <taxon>Vibrio</taxon>
    </lineage>
</organism>
<feature type="chain" id="PRO_1000073458" description="Phosphonoacetaldehyde hydrolase">
    <location>
        <begin position="1"/>
        <end position="271"/>
    </location>
</feature>
<feature type="active site" description="Nucleophile" evidence="1">
    <location>
        <position position="12"/>
    </location>
</feature>
<feature type="active site" description="Schiff-base intermediate with substrate" evidence="1">
    <location>
        <position position="54"/>
    </location>
</feature>
<feature type="binding site" evidence="1">
    <location>
        <position position="12"/>
    </location>
    <ligand>
        <name>Mg(2+)</name>
        <dbReference type="ChEBI" id="CHEBI:18420"/>
    </ligand>
</feature>
<feature type="binding site" evidence="1">
    <location>
        <position position="14"/>
    </location>
    <ligand>
        <name>Mg(2+)</name>
        <dbReference type="ChEBI" id="CHEBI:18420"/>
    </ligand>
</feature>
<feature type="binding site" evidence="1">
    <location>
        <position position="188"/>
    </location>
    <ligand>
        <name>Mg(2+)</name>
        <dbReference type="ChEBI" id="CHEBI:18420"/>
    </ligand>
</feature>
<comment type="function">
    <text evidence="1">Involved in phosphonate degradation.</text>
</comment>
<comment type="catalytic activity">
    <reaction evidence="1">
        <text>phosphonoacetaldehyde + H2O = acetaldehyde + phosphate + H(+)</text>
        <dbReference type="Rhea" id="RHEA:18905"/>
        <dbReference type="ChEBI" id="CHEBI:15343"/>
        <dbReference type="ChEBI" id="CHEBI:15377"/>
        <dbReference type="ChEBI" id="CHEBI:15378"/>
        <dbReference type="ChEBI" id="CHEBI:43474"/>
        <dbReference type="ChEBI" id="CHEBI:58383"/>
        <dbReference type="EC" id="3.11.1.1"/>
    </reaction>
</comment>
<comment type="cofactor">
    <cofactor evidence="1">
        <name>Mg(2+)</name>
        <dbReference type="ChEBI" id="CHEBI:18420"/>
    </cofactor>
    <text evidence="1">Binds 1 Mg(2+) ion per subunit.</text>
</comment>
<comment type="subunit">
    <text evidence="1">Homodimer.</text>
</comment>
<comment type="similarity">
    <text evidence="1">Belongs to the HAD-like hydrolase superfamily. PhnX family.</text>
</comment>
<proteinExistence type="inferred from homology"/>
<gene>
    <name evidence="1" type="primary">phnX</name>
    <name type="ordered locus">VC0395_0548</name>
    <name type="ordered locus">VC395_A0709</name>
</gene>
<evidence type="ECO:0000255" key="1">
    <source>
        <dbReference type="HAMAP-Rule" id="MF_01375"/>
    </source>
</evidence>
<protein>
    <recommendedName>
        <fullName evidence="1">Phosphonoacetaldehyde hydrolase</fullName>
        <shortName evidence="1">Phosphonatase</shortName>
        <ecNumber evidence="1">3.11.1.1</ecNumber>
    </recommendedName>
    <alternativeName>
        <fullName evidence="1">Phosphonoacetaldehyde phosphonohydrolase</fullName>
    </alternativeName>
</protein>
<keyword id="KW-0378">Hydrolase</keyword>
<keyword id="KW-0460">Magnesium</keyword>
<keyword id="KW-0479">Metal-binding</keyword>
<keyword id="KW-0704">Schiff base</keyword>
<sequence length="271" mass="29539">MMNSPIQAVIFDWAGTIVDFGSFAPTSIFVEAFKQGFDFEISLAEAREPMGLGKWQHIEAVGKLPTVAQRWQKQFGRPMQASDIDAIYAAFMPLQIAKVADHAAPIPHSLEVVEQIRSRGIKIGSCSGYPRQVMDVLIAAAADYGYRPDYVVATDDLAQGGRPAPFMALKNVIELGVTDVRACVKVDDALPGIEEGHNAGMWTVGLLLSGNEAGLTLEEYQHADDQTLQAARERAQAKLQQAKPHYLIDTVADLPAVLAQIEQRLLAGERP</sequence>
<name>PHNX_VIBC3</name>
<accession>A5F051</accession>
<accession>C3M5Y0</accession>